<evidence type="ECO:0000250" key="1"/>
<evidence type="ECO:0000255" key="2"/>
<evidence type="ECO:0000305" key="3"/>
<protein>
    <recommendedName>
        <fullName>Clostripain</fullName>
        <ecNumber>3.4.22.8</ecNumber>
    </recommendedName>
    <alternativeName>
        <fullName>Clostridiopeptidase B</fullName>
    </alternativeName>
    <component>
        <recommendedName>
            <fullName>Clostripain light chain</fullName>
        </recommendedName>
    </component>
    <component>
        <recommendedName>
            <fullName>Clostripain heavy chain</fullName>
        </recommendedName>
    </component>
</protein>
<keyword id="KW-0002">3D-structure</keyword>
<keyword id="KW-0903">Direct protein sequencing</keyword>
<keyword id="KW-0378">Hydrolase</keyword>
<keyword id="KW-0645">Protease</keyword>
<keyword id="KW-0732">Signal</keyword>
<keyword id="KW-0788">Thiol protease</keyword>
<keyword id="KW-0865">Zymogen</keyword>
<gene>
    <name type="primary">cloSI</name>
</gene>
<name>CLOS_HATHI</name>
<feature type="signal peptide" evidence="2">
    <location>
        <begin position="1"/>
        <end position="27"/>
    </location>
</feature>
<feature type="propeptide" id="PRO_0000028511" evidence="2">
    <location>
        <begin position="28"/>
        <end position="50"/>
    </location>
</feature>
<feature type="chain" id="PRO_0000028512" description="Clostripain light chain">
    <location>
        <begin position="51"/>
        <end position="181"/>
    </location>
</feature>
<feature type="propeptide" id="PRO_0000028513" description="Linker">
    <location>
        <begin position="182"/>
        <end position="190"/>
    </location>
</feature>
<feature type="chain" id="PRO_0000028514" description="Clostripain heavy chain">
    <location>
        <begin position="191"/>
        <end position="526"/>
    </location>
</feature>
<feature type="active site" description="Nucleophile" evidence="1">
    <location>
        <position position="231"/>
    </location>
</feature>
<feature type="sequence conflict" description="In Ref. 2; AA sequence." evidence="3" ref="2">
    <original>R</original>
    <variation>NQL</variation>
    <location>
        <position position="127"/>
    </location>
</feature>
<feature type="sequence conflict" description="In Ref. 2; AA sequence." evidence="3" ref="2">
    <original>HGGG</original>
    <variation>GDGH</variation>
    <location>
        <begin position="176"/>
        <end position="179"/>
    </location>
</feature>
<feature type="sequence conflict" description="In Ref. 3; AA sequence." evidence="3" ref="3">
    <original>S</original>
    <variation>H</variation>
    <location>
        <position position="197"/>
    </location>
</feature>
<feature type="sequence conflict" description="In Ref. 3; AA sequence." evidence="3" ref="3">
    <original>I</original>
    <variation>L</variation>
    <location>
        <position position="213"/>
    </location>
</feature>
<feature type="sequence conflict" description="In Ref. 3; AA sequence." evidence="3" ref="3">
    <original>H</original>
    <variation>T</variation>
    <location>
        <position position="216"/>
    </location>
</feature>
<feature type="sequence conflict" description="In Ref. 3; AA sequence." evidence="3" ref="3">
    <original>L</original>
    <variation>M</variation>
    <location>
        <position position="232"/>
    </location>
</feature>
<sequence>MLRRKVSTLLMTALITTSFLNSKPVYANPVTKSKDNNLKEVQQVTSKSNKNKNQKVTIMYYCDADNNLEGSLLNDIEEMKTGYKDSPNLNLIALVDRSPRYSSDEKVLGEDFSDTRLYKIEHNKANRLDGKNEFPEISTTSKYEANMGDPEVLKKFIDYCKSNYEADKYVLIMANHGGGAREKSNPRLNRAICWDDSNLDKNGEADCLYMGEISDHLTEKQSVDLLAFDACLMGTAEVAYQYRPGNGGFSADTLVASSPVVWGPGFKYDKIFDRIKAGGGTNNEDDLTLGGKEQNFDPATITNEQLGALFVEEQRDSTHANGRYDQHLSFYDLKKAESVKRAIDNLAVNLSNENKKSEIEKLRGSGIHTDLMHYFDEYSEGEWVEYPYFDVYDLCEKINKSENFSSKTKDLASNAMNKLNEMIVYSFGDPSNNFKEGKNGLSIFLPNGDKKYSTYYTSTKIPHWTMQSWYNSIDTVKYGLNPYGKLSWCKDGQDPEINKVGNWFELLDSWFDKTNDVTGGVNHYQW</sequence>
<proteinExistence type="evidence at protein level"/>
<accession>P09870</accession>
<accession>P09869</accession>
<reference key="1">
    <citation type="journal article" date="1993" name="Mol. Gen. Genet.">
        <title>The heterodimeric protease clostripain from Clostridium histolyticum is encoded by a single gene.</title>
        <authorList>
            <person name="Dargatz H."/>
            <person name="Diefenthal T."/>
            <person name="Witte V."/>
            <person name="Reipen G."/>
            <person name="von Wettstein D."/>
        </authorList>
    </citation>
    <scope>NUCLEOTIDE SEQUENCE [GENOMIC DNA]</scope>
</reference>
<reference key="2">
    <citation type="journal article" date="1984" name="Eur. J. Biochem.">
        <title>Primary structure of alpha-clostripain light chain.</title>
        <authorList>
            <person name="Gilles A.M."/>
            <person name="Lecroisey A."/>
            <person name="Keil B."/>
        </authorList>
    </citation>
    <scope>PROTEIN SEQUENCE OF 51-181</scope>
</reference>
<reference key="3">
    <citation type="journal article" date="1983" name="Eur. J. Biochem.">
        <title>Amino-acid sequences of the active-site sulfhydryl peptide and other thiol peptides from the cysteine proteinase alpha-clostripain.</title>
        <authorList>
            <person name="Gilles A.M."/>
            <person name="de Wolf A."/>
            <person name="Keil B."/>
        </authorList>
    </citation>
    <scope>PRELIMINARY PROTEIN SEQUENCE OF 51-73 AND 191-232</scope>
</reference>
<organism>
    <name type="scientific">Hathewaya histolytica</name>
    <name type="common">Clostridium histolyticum</name>
    <dbReference type="NCBI Taxonomy" id="1498"/>
    <lineage>
        <taxon>Bacteria</taxon>
        <taxon>Bacillati</taxon>
        <taxon>Bacillota</taxon>
        <taxon>Clostridia</taxon>
        <taxon>Eubacteriales</taxon>
        <taxon>Clostridiaceae</taxon>
        <taxon>Hathewaya</taxon>
    </lineage>
</organism>
<comment type="function">
    <text>Cysteine endopeptidase with strict specificity.</text>
</comment>
<comment type="catalytic activity">
    <reaction>
        <text>Preferential cleavage: Arg-|-Xaa, including Arg-|-Pro bond, but not Lys-|-Xaa.</text>
        <dbReference type="EC" id="3.4.22.8"/>
    </reaction>
</comment>
<comment type="subunit">
    <text>Heterodimer of a light chain and a heavy chain held together by strong non-covalent forces rather than by intramolecular disulfide bridges.</text>
</comment>
<comment type="similarity">
    <text evidence="3">Belongs to the peptidase C11 family.</text>
</comment>
<dbReference type="EC" id="3.4.22.8"/>
<dbReference type="EMBL" id="X63673">
    <property type="protein sequence ID" value="CAA45212.1"/>
    <property type="molecule type" value="Genomic_DNA"/>
</dbReference>
<dbReference type="PIR" id="A29174">
    <property type="entry name" value="A29174"/>
</dbReference>
<dbReference type="PIR" id="A29175">
    <property type="entry name" value="A29175"/>
</dbReference>
<dbReference type="PIR" id="B29175">
    <property type="entry name" value="B29175"/>
</dbReference>
<dbReference type="PIR" id="S35190">
    <property type="entry name" value="S35190"/>
</dbReference>
<dbReference type="RefSeq" id="WP_138210406.1">
    <property type="nucleotide sequence ID" value="NZ_CBCRUQ010000019.1"/>
</dbReference>
<dbReference type="PDB" id="9CIP">
    <property type="method" value="EM"/>
    <property type="resolution" value="2.50 A"/>
    <property type="chains" value="A/B=1-526"/>
</dbReference>
<dbReference type="PDBsum" id="9CIP"/>
<dbReference type="EMDB" id="EMD-45623"/>
<dbReference type="SMR" id="P09870"/>
<dbReference type="ChEMBL" id="CHEMBL5572"/>
<dbReference type="MEROPS" id="C11.001"/>
<dbReference type="KEGG" id="ag:CAA45212"/>
<dbReference type="OrthoDB" id="5507507at2"/>
<dbReference type="BRENDA" id="3.4.22.8">
    <property type="organism ID" value="1481"/>
</dbReference>
<dbReference type="GO" id="GO:0004197">
    <property type="term" value="F:cysteine-type endopeptidase activity"/>
    <property type="evidence" value="ECO:0007669"/>
    <property type="project" value="UniProtKB-EC"/>
</dbReference>
<dbReference type="GO" id="GO:0006508">
    <property type="term" value="P:proteolysis"/>
    <property type="evidence" value="ECO:0007669"/>
    <property type="project" value="UniProtKB-KW"/>
</dbReference>
<dbReference type="Gene3D" id="3.40.50.11970">
    <property type="match status" value="1"/>
</dbReference>
<dbReference type="InterPro" id="IPR014173">
    <property type="entry name" value="Pept_C11_CLOspp"/>
</dbReference>
<dbReference type="InterPro" id="IPR005077">
    <property type="entry name" value="Peptidase_C11"/>
</dbReference>
<dbReference type="NCBIfam" id="TIGR02806">
    <property type="entry name" value="clostrip"/>
    <property type="match status" value="1"/>
</dbReference>
<dbReference type="PANTHER" id="PTHR37835">
    <property type="entry name" value="ALPHA-CLOSTRIPAIN"/>
    <property type="match status" value="1"/>
</dbReference>
<dbReference type="PANTHER" id="PTHR37835:SF1">
    <property type="entry name" value="ALPHA-CLOSTRIPAIN"/>
    <property type="match status" value="1"/>
</dbReference>
<dbReference type="Pfam" id="PF03415">
    <property type="entry name" value="Peptidase_C11"/>
    <property type="match status" value="1"/>
</dbReference>